<proteinExistence type="inferred from homology"/>
<accession>A5F6M2</accession>
<accession>C3M2M3</accession>
<organism>
    <name type="scientific">Vibrio cholerae serotype O1 (strain ATCC 39541 / Classical Ogawa 395 / O395)</name>
    <dbReference type="NCBI Taxonomy" id="345073"/>
    <lineage>
        <taxon>Bacteria</taxon>
        <taxon>Pseudomonadati</taxon>
        <taxon>Pseudomonadota</taxon>
        <taxon>Gammaproteobacteria</taxon>
        <taxon>Vibrionales</taxon>
        <taxon>Vibrionaceae</taxon>
        <taxon>Vibrio</taxon>
    </lineage>
</organism>
<gene>
    <name type="ordered locus">VC0395_A1625</name>
    <name type="ordered locus">VC395_2155</name>
</gene>
<feature type="chain" id="PRO_1000072867" description="UPF0352 protein VC0395_A1625/VC395_2155">
    <location>
        <begin position="1"/>
        <end position="71"/>
    </location>
</feature>
<evidence type="ECO:0000255" key="1">
    <source>
        <dbReference type="HAMAP-Rule" id="MF_00816"/>
    </source>
</evidence>
<reference key="1">
    <citation type="submission" date="2007-03" db="EMBL/GenBank/DDBJ databases">
        <authorList>
            <person name="Heidelberg J."/>
        </authorList>
    </citation>
    <scope>NUCLEOTIDE SEQUENCE [LARGE SCALE GENOMIC DNA]</scope>
    <source>
        <strain>ATCC 39541 / Classical Ogawa 395 / O395</strain>
    </source>
</reference>
<reference key="2">
    <citation type="journal article" date="2008" name="PLoS ONE">
        <title>A recalibrated molecular clock and independent origins for the cholera pandemic clones.</title>
        <authorList>
            <person name="Feng L."/>
            <person name="Reeves P.R."/>
            <person name="Lan R."/>
            <person name="Ren Y."/>
            <person name="Gao C."/>
            <person name="Zhou Z."/>
            <person name="Ren Y."/>
            <person name="Cheng J."/>
            <person name="Wang W."/>
            <person name="Wang J."/>
            <person name="Qian W."/>
            <person name="Li D."/>
            <person name="Wang L."/>
        </authorList>
    </citation>
    <scope>NUCLEOTIDE SEQUENCE [LARGE SCALE GENOMIC DNA]</scope>
    <source>
        <strain>ATCC 39541 / Classical Ogawa 395 / O395</strain>
    </source>
</reference>
<name>Y2825_VIBC3</name>
<comment type="similarity">
    <text evidence="1">Belongs to the UPF0352 family.</text>
</comment>
<sequence length="71" mass="7619">MPITSKYSDEHVESILTEIAAVLNKHNASPELTLMVVGNIATNVINQNVAAAQRKVIAEKFAQALVSSLQS</sequence>
<protein>
    <recommendedName>
        <fullName evidence="1">UPF0352 protein VC0395_A1625/VC395_2155</fullName>
    </recommendedName>
</protein>
<dbReference type="EMBL" id="CP000627">
    <property type="protein sequence ID" value="ABQ19959.1"/>
    <property type="molecule type" value="Genomic_DNA"/>
</dbReference>
<dbReference type="EMBL" id="CP001235">
    <property type="protein sequence ID" value="ACP10147.1"/>
    <property type="molecule type" value="Genomic_DNA"/>
</dbReference>
<dbReference type="RefSeq" id="WP_001123168.1">
    <property type="nucleotide sequence ID" value="NZ_JAACZH010000001.1"/>
</dbReference>
<dbReference type="SMR" id="A5F6M2"/>
<dbReference type="KEGG" id="vco:VC0395_A1625"/>
<dbReference type="KEGG" id="vcr:VC395_2155"/>
<dbReference type="PATRIC" id="fig|345073.21.peg.2081"/>
<dbReference type="eggNOG" id="COG3082">
    <property type="taxonomic scope" value="Bacteria"/>
</dbReference>
<dbReference type="HOGENOM" id="CLU_175457_0_0_6"/>
<dbReference type="OrthoDB" id="5771474at2"/>
<dbReference type="Proteomes" id="UP000000249">
    <property type="component" value="Chromosome 2"/>
</dbReference>
<dbReference type="Gene3D" id="1.10.3390.10">
    <property type="entry name" value="YejL-like"/>
    <property type="match status" value="1"/>
</dbReference>
<dbReference type="HAMAP" id="MF_00816">
    <property type="entry name" value="UPF0352"/>
    <property type="match status" value="1"/>
</dbReference>
<dbReference type="InterPro" id="IPR009857">
    <property type="entry name" value="UPF0352"/>
</dbReference>
<dbReference type="InterPro" id="IPR023202">
    <property type="entry name" value="YejL_sf"/>
</dbReference>
<dbReference type="NCBIfam" id="NF010242">
    <property type="entry name" value="PRK13689.1"/>
    <property type="match status" value="1"/>
</dbReference>
<dbReference type="Pfam" id="PF07208">
    <property type="entry name" value="DUF1414"/>
    <property type="match status" value="1"/>
</dbReference>
<dbReference type="PIRSF" id="PIRSF006188">
    <property type="entry name" value="UCP006188"/>
    <property type="match status" value="1"/>
</dbReference>
<dbReference type="SUPFAM" id="SSF158651">
    <property type="entry name" value="YejL-like"/>
    <property type="match status" value="1"/>
</dbReference>